<evidence type="ECO:0000255" key="1">
    <source>
        <dbReference type="HAMAP-Rule" id="MF_00054"/>
    </source>
</evidence>
<keyword id="KW-0963">Cytoplasm</keyword>
<keyword id="KW-0251">Elongation factor</keyword>
<keyword id="KW-0342">GTP-binding</keyword>
<keyword id="KW-0547">Nucleotide-binding</keyword>
<keyword id="KW-0648">Protein biosynthesis</keyword>
<protein>
    <recommendedName>
        <fullName evidence="1">Elongation factor G</fullName>
        <shortName evidence="1">EF-G</shortName>
    </recommendedName>
</protein>
<sequence length="704" mass="77599">MARTTPIARYRNIGISAHIDAGKTTTTERILFYTGVNHKIGEVHDGAATMDWMEQEQERGITITSAATTAFWSGMAKQYEPHRINIIDTPGHVDFTIEVERSMRVLDGAVMVYCAVGGVQPQSETVWRQANKYKVPRIAFVNKMDRMGANFLKVVGQIKTRLGANPVPLQLAIGAEEGFTGVVDLVKMKAINWNDADQGVTFEYEDIPADMQDLANEWHQNLIESAAEASEELMEKYLGGEELTEEEIKQALRQRVLNNEIILVTCGSAFKNKGVQAMLDAVIDYLPSPVDVPAINGILDDGKDTPAERHASDDEPFSALAFKIATDPFVGNLTFFRVYSGVVNSGDTVLNSVKTARERFGRIVQMHANKREEIKEVRAGDIAAAIGLKDVTTGDTLCDPENPIILERMEFPEPVISIAVEPKTKADQEKMGLALGRLAKEDPSFRVWTDEESNQTIIAGMGELHLDIIVDRMKREFNVEANVGKPQVAYREAIRAKVTDIEGKHAKQSGGRGQYGHVVIDMYPLEPGSNPKGYEFINDIKGGVIPGEYIPAVDKGIQEQLKSGPLAGYPVVDLGVRLHFGSYHDVDSSELAFKLAASIAFKEGFKKAKPVLLEPIMKVEVETPEENTGDVIGDLSRRRGMLKGQESEVTGVKIHAEVPLSEMFGYATQLRSLTKGRASYTMEFLKYDDAPNNVAQAVIEARGK</sequence>
<name>EFG_SALG2</name>
<organism>
    <name type="scientific">Salmonella gallinarum (strain 287/91 / NCTC 13346)</name>
    <dbReference type="NCBI Taxonomy" id="550538"/>
    <lineage>
        <taxon>Bacteria</taxon>
        <taxon>Pseudomonadati</taxon>
        <taxon>Pseudomonadota</taxon>
        <taxon>Gammaproteobacteria</taxon>
        <taxon>Enterobacterales</taxon>
        <taxon>Enterobacteriaceae</taxon>
        <taxon>Salmonella</taxon>
    </lineage>
</organism>
<proteinExistence type="inferred from homology"/>
<accession>B5RH09</accession>
<reference key="1">
    <citation type="journal article" date="2008" name="Genome Res.">
        <title>Comparative genome analysis of Salmonella enteritidis PT4 and Salmonella gallinarum 287/91 provides insights into evolutionary and host adaptation pathways.</title>
        <authorList>
            <person name="Thomson N.R."/>
            <person name="Clayton D.J."/>
            <person name="Windhorst D."/>
            <person name="Vernikos G."/>
            <person name="Davidson S."/>
            <person name="Churcher C."/>
            <person name="Quail M.A."/>
            <person name="Stevens M."/>
            <person name="Jones M.A."/>
            <person name="Watson M."/>
            <person name="Barron A."/>
            <person name="Layton A."/>
            <person name="Pickard D."/>
            <person name="Kingsley R.A."/>
            <person name="Bignell A."/>
            <person name="Clark L."/>
            <person name="Harris B."/>
            <person name="Ormond D."/>
            <person name="Abdellah Z."/>
            <person name="Brooks K."/>
            <person name="Cherevach I."/>
            <person name="Chillingworth T."/>
            <person name="Woodward J."/>
            <person name="Norberczak H."/>
            <person name="Lord A."/>
            <person name="Arrowsmith C."/>
            <person name="Jagels K."/>
            <person name="Moule S."/>
            <person name="Mungall K."/>
            <person name="Saunders M."/>
            <person name="Whitehead S."/>
            <person name="Chabalgoity J.A."/>
            <person name="Maskell D."/>
            <person name="Humphreys T."/>
            <person name="Roberts M."/>
            <person name="Barrow P.A."/>
            <person name="Dougan G."/>
            <person name="Parkhill J."/>
        </authorList>
    </citation>
    <scope>NUCLEOTIDE SEQUENCE [LARGE SCALE GENOMIC DNA]</scope>
    <source>
        <strain>287/91 / NCTC 13346</strain>
    </source>
</reference>
<comment type="function">
    <text evidence="1">Catalyzes the GTP-dependent ribosomal translocation step during translation elongation. During this step, the ribosome changes from the pre-translocational (PRE) to the post-translocational (POST) state as the newly formed A-site-bound peptidyl-tRNA and P-site-bound deacylated tRNA move to the P and E sites, respectively. Catalyzes the coordinated movement of the two tRNA molecules, the mRNA and conformational changes in the ribosome.</text>
</comment>
<comment type="subcellular location">
    <subcellularLocation>
        <location evidence="1">Cytoplasm</location>
    </subcellularLocation>
</comment>
<comment type="similarity">
    <text evidence="1">Belongs to the TRAFAC class translation factor GTPase superfamily. Classic translation factor GTPase family. EF-G/EF-2 subfamily.</text>
</comment>
<gene>
    <name evidence="1" type="primary">fusA</name>
    <name type="ordered locus">SG3993</name>
</gene>
<dbReference type="EMBL" id="AM933173">
    <property type="protein sequence ID" value="CAR39763.1"/>
    <property type="molecule type" value="Genomic_DNA"/>
</dbReference>
<dbReference type="RefSeq" id="WP_000124693.1">
    <property type="nucleotide sequence ID" value="NC_011274.1"/>
</dbReference>
<dbReference type="SMR" id="B5RH09"/>
<dbReference type="KEGG" id="seg:SG3993"/>
<dbReference type="HOGENOM" id="CLU_002794_4_1_6"/>
<dbReference type="Proteomes" id="UP000008321">
    <property type="component" value="Chromosome"/>
</dbReference>
<dbReference type="GO" id="GO:0005737">
    <property type="term" value="C:cytoplasm"/>
    <property type="evidence" value="ECO:0007669"/>
    <property type="project" value="UniProtKB-SubCell"/>
</dbReference>
<dbReference type="GO" id="GO:0005525">
    <property type="term" value="F:GTP binding"/>
    <property type="evidence" value="ECO:0007669"/>
    <property type="project" value="UniProtKB-UniRule"/>
</dbReference>
<dbReference type="GO" id="GO:0003924">
    <property type="term" value="F:GTPase activity"/>
    <property type="evidence" value="ECO:0007669"/>
    <property type="project" value="InterPro"/>
</dbReference>
<dbReference type="GO" id="GO:0097216">
    <property type="term" value="F:guanosine tetraphosphate binding"/>
    <property type="evidence" value="ECO:0007669"/>
    <property type="project" value="UniProtKB-ARBA"/>
</dbReference>
<dbReference type="GO" id="GO:0003746">
    <property type="term" value="F:translation elongation factor activity"/>
    <property type="evidence" value="ECO:0007669"/>
    <property type="project" value="UniProtKB-UniRule"/>
</dbReference>
<dbReference type="GO" id="GO:0032790">
    <property type="term" value="P:ribosome disassembly"/>
    <property type="evidence" value="ECO:0007669"/>
    <property type="project" value="TreeGrafter"/>
</dbReference>
<dbReference type="CDD" id="cd01886">
    <property type="entry name" value="EF-G"/>
    <property type="match status" value="1"/>
</dbReference>
<dbReference type="CDD" id="cd16262">
    <property type="entry name" value="EFG_III"/>
    <property type="match status" value="1"/>
</dbReference>
<dbReference type="CDD" id="cd01434">
    <property type="entry name" value="EFG_mtEFG1_IV"/>
    <property type="match status" value="1"/>
</dbReference>
<dbReference type="CDD" id="cd03713">
    <property type="entry name" value="EFG_mtEFG_C"/>
    <property type="match status" value="1"/>
</dbReference>
<dbReference type="CDD" id="cd04088">
    <property type="entry name" value="EFG_mtEFG_II"/>
    <property type="match status" value="1"/>
</dbReference>
<dbReference type="FunFam" id="2.40.30.10:FF:000006">
    <property type="entry name" value="Elongation factor G"/>
    <property type="match status" value="1"/>
</dbReference>
<dbReference type="FunFam" id="3.30.230.10:FF:000003">
    <property type="entry name" value="Elongation factor G"/>
    <property type="match status" value="1"/>
</dbReference>
<dbReference type="FunFam" id="3.30.70.240:FF:000001">
    <property type="entry name" value="Elongation factor G"/>
    <property type="match status" value="1"/>
</dbReference>
<dbReference type="FunFam" id="3.30.70.870:FF:000001">
    <property type="entry name" value="Elongation factor G"/>
    <property type="match status" value="1"/>
</dbReference>
<dbReference type="FunFam" id="3.40.50.300:FF:000029">
    <property type="entry name" value="Elongation factor G"/>
    <property type="match status" value="1"/>
</dbReference>
<dbReference type="Gene3D" id="3.30.230.10">
    <property type="match status" value="1"/>
</dbReference>
<dbReference type="Gene3D" id="3.30.70.240">
    <property type="match status" value="1"/>
</dbReference>
<dbReference type="Gene3D" id="3.30.70.870">
    <property type="entry name" value="Elongation Factor G (Translational Gtpase), domain 3"/>
    <property type="match status" value="1"/>
</dbReference>
<dbReference type="Gene3D" id="3.40.50.300">
    <property type="entry name" value="P-loop containing nucleotide triphosphate hydrolases"/>
    <property type="match status" value="1"/>
</dbReference>
<dbReference type="Gene3D" id="2.40.30.10">
    <property type="entry name" value="Translation factors"/>
    <property type="match status" value="1"/>
</dbReference>
<dbReference type="HAMAP" id="MF_00054_B">
    <property type="entry name" value="EF_G_EF_2_B"/>
    <property type="match status" value="1"/>
</dbReference>
<dbReference type="InterPro" id="IPR041095">
    <property type="entry name" value="EFG_II"/>
</dbReference>
<dbReference type="InterPro" id="IPR009022">
    <property type="entry name" value="EFG_III"/>
</dbReference>
<dbReference type="InterPro" id="IPR035647">
    <property type="entry name" value="EFG_III/V"/>
</dbReference>
<dbReference type="InterPro" id="IPR047872">
    <property type="entry name" value="EFG_IV"/>
</dbReference>
<dbReference type="InterPro" id="IPR035649">
    <property type="entry name" value="EFG_V"/>
</dbReference>
<dbReference type="InterPro" id="IPR000640">
    <property type="entry name" value="EFG_V-like"/>
</dbReference>
<dbReference type="InterPro" id="IPR004161">
    <property type="entry name" value="EFTu-like_2"/>
</dbReference>
<dbReference type="InterPro" id="IPR031157">
    <property type="entry name" value="G_TR_CS"/>
</dbReference>
<dbReference type="InterPro" id="IPR027417">
    <property type="entry name" value="P-loop_NTPase"/>
</dbReference>
<dbReference type="InterPro" id="IPR020568">
    <property type="entry name" value="Ribosomal_Su5_D2-typ_SF"/>
</dbReference>
<dbReference type="InterPro" id="IPR014721">
    <property type="entry name" value="Ribsml_uS5_D2-typ_fold_subgr"/>
</dbReference>
<dbReference type="InterPro" id="IPR005225">
    <property type="entry name" value="Small_GTP-bd"/>
</dbReference>
<dbReference type="InterPro" id="IPR000795">
    <property type="entry name" value="T_Tr_GTP-bd_dom"/>
</dbReference>
<dbReference type="InterPro" id="IPR009000">
    <property type="entry name" value="Transl_B-barrel_sf"/>
</dbReference>
<dbReference type="InterPro" id="IPR004540">
    <property type="entry name" value="Transl_elong_EFG/EF2"/>
</dbReference>
<dbReference type="InterPro" id="IPR005517">
    <property type="entry name" value="Transl_elong_EFG/EF2_IV"/>
</dbReference>
<dbReference type="NCBIfam" id="TIGR00484">
    <property type="entry name" value="EF-G"/>
    <property type="match status" value="1"/>
</dbReference>
<dbReference type="NCBIfam" id="NF009381">
    <property type="entry name" value="PRK12740.1-5"/>
    <property type="match status" value="1"/>
</dbReference>
<dbReference type="NCBIfam" id="TIGR00231">
    <property type="entry name" value="small_GTP"/>
    <property type="match status" value="1"/>
</dbReference>
<dbReference type="PANTHER" id="PTHR43261:SF1">
    <property type="entry name" value="RIBOSOME-RELEASING FACTOR 2, MITOCHONDRIAL"/>
    <property type="match status" value="1"/>
</dbReference>
<dbReference type="PANTHER" id="PTHR43261">
    <property type="entry name" value="TRANSLATION ELONGATION FACTOR G-RELATED"/>
    <property type="match status" value="1"/>
</dbReference>
<dbReference type="Pfam" id="PF00679">
    <property type="entry name" value="EFG_C"/>
    <property type="match status" value="1"/>
</dbReference>
<dbReference type="Pfam" id="PF14492">
    <property type="entry name" value="EFG_III"/>
    <property type="match status" value="1"/>
</dbReference>
<dbReference type="Pfam" id="PF03764">
    <property type="entry name" value="EFG_IV"/>
    <property type="match status" value="1"/>
</dbReference>
<dbReference type="Pfam" id="PF00009">
    <property type="entry name" value="GTP_EFTU"/>
    <property type="match status" value="1"/>
</dbReference>
<dbReference type="Pfam" id="PF03144">
    <property type="entry name" value="GTP_EFTU_D2"/>
    <property type="match status" value="1"/>
</dbReference>
<dbReference type="PRINTS" id="PR00315">
    <property type="entry name" value="ELONGATNFCT"/>
</dbReference>
<dbReference type="SMART" id="SM00838">
    <property type="entry name" value="EFG_C"/>
    <property type="match status" value="1"/>
</dbReference>
<dbReference type="SMART" id="SM00889">
    <property type="entry name" value="EFG_IV"/>
    <property type="match status" value="1"/>
</dbReference>
<dbReference type="SUPFAM" id="SSF54980">
    <property type="entry name" value="EF-G C-terminal domain-like"/>
    <property type="match status" value="2"/>
</dbReference>
<dbReference type="SUPFAM" id="SSF52540">
    <property type="entry name" value="P-loop containing nucleoside triphosphate hydrolases"/>
    <property type="match status" value="1"/>
</dbReference>
<dbReference type="SUPFAM" id="SSF54211">
    <property type="entry name" value="Ribosomal protein S5 domain 2-like"/>
    <property type="match status" value="1"/>
</dbReference>
<dbReference type="SUPFAM" id="SSF50447">
    <property type="entry name" value="Translation proteins"/>
    <property type="match status" value="1"/>
</dbReference>
<dbReference type="PROSITE" id="PS00301">
    <property type="entry name" value="G_TR_1"/>
    <property type="match status" value="1"/>
</dbReference>
<dbReference type="PROSITE" id="PS51722">
    <property type="entry name" value="G_TR_2"/>
    <property type="match status" value="1"/>
</dbReference>
<feature type="chain" id="PRO_1000091757" description="Elongation factor G">
    <location>
        <begin position="1"/>
        <end position="704"/>
    </location>
</feature>
<feature type="domain" description="tr-type G">
    <location>
        <begin position="8"/>
        <end position="290"/>
    </location>
</feature>
<feature type="binding site" evidence="1">
    <location>
        <begin position="17"/>
        <end position="24"/>
    </location>
    <ligand>
        <name>GTP</name>
        <dbReference type="ChEBI" id="CHEBI:37565"/>
    </ligand>
</feature>
<feature type="binding site" evidence="1">
    <location>
        <begin position="88"/>
        <end position="92"/>
    </location>
    <ligand>
        <name>GTP</name>
        <dbReference type="ChEBI" id="CHEBI:37565"/>
    </ligand>
</feature>
<feature type="binding site" evidence="1">
    <location>
        <begin position="142"/>
        <end position="145"/>
    </location>
    <ligand>
        <name>GTP</name>
        <dbReference type="ChEBI" id="CHEBI:37565"/>
    </ligand>
</feature>